<sequence>MNTPAQLSLPLYLPDDETFASFWPGDNSSLLAALQNVLRQEHSGYIYLWAREGAGRSHLLHAACAELSQRGDAVGYVPLDKRTWFVPEVLDGMEQLSLVCIDNIECIAGDELWEMAIFDLYNRILESGKTRLLITGDRPPRQLNLGLPDLASRLDWGQIYKLQPLSDEDKLQALQLRARLRGFELPEDVGRFLLKRLDREMRTLFMTLDQLDRASITAQRKLTIPFVKEILKL</sequence>
<keyword id="KW-0235">DNA replication</keyword>
<keyword id="KW-0236">DNA replication inhibitor</keyword>
<evidence type="ECO:0000250" key="1"/>
<evidence type="ECO:0000255" key="2">
    <source>
        <dbReference type="HAMAP-Rule" id="MF_01158"/>
    </source>
</evidence>
<evidence type="ECO:0000305" key="3"/>
<dbReference type="EMBL" id="CU928158">
    <property type="protein sequence ID" value="CAQ88223.1"/>
    <property type="status" value="ALT_INIT"/>
    <property type="molecule type" value="Genomic_DNA"/>
</dbReference>
<dbReference type="RefSeq" id="WP_072271641.1">
    <property type="nucleotide sequence ID" value="NC_011740.1"/>
</dbReference>
<dbReference type="SMR" id="B7LKE6"/>
<dbReference type="KEGG" id="efe:EFER_0680"/>
<dbReference type="HOGENOM" id="CLU_072265_1_1_6"/>
<dbReference type="Proteomes" id="UP000000745">
    <property type="component" value="Chromosome"/>
</dbReference>
<dbReference type="GO" id="GO:0006270">
    <property type="term" value="P:DNA replication initiation"/>
    <property type="evidence" value="ECO:0007669"/>
    <property type="project" value="TreeGrafter"/>
</dbReference>
<dbReference type="GO" id="GO:0032297">
    <property type="term" value="P:negative regulation of DNA-templated DNA replication initiation"/>
    <property type="evidence" value="ECO:0007669"/>
    <property type="project" value="InterPro"/>
</dbReference>
<dbReference type="FunFam" id="1.10.8.60:FF:000024">
    <property type="entry name" value="DnaA regulatory inactivator Hda"/>
    <property type="match status" value="1"/>
</dbReference>
<dbReference type="FunFam" id="3.40.50.300:FF:000452">
    <property type="entry name" value="DnaA regulatory inactivator Hda"/>
    <property type="match status" value="1"/>
</dbReference>
<dbReference type="Gene3D" id="1.10.8.60">
    <property type="match status" value="1"/>
</dbReference>
<dbReference type="Gene3D" id="3.40.50.300">
    <property type="entry name" value="P-loop containing nucleotide triphosphate hydrolases"/>
    <property type="match status" value="1"/>
</dbReference>
<dbReference type="HAMAP" id="MF_01158">
    <property type="entry name" value="Hda"/>
    <property type="match status" value="1"/>
</dbReference>
<dbReference type="InterPro" id="IPR020591">
    <property type="entry name" value="Chromosome_initiator_DnaA-like"/>
</dbReference>
<dbReference type="InterPro" id="IPR013317">
    <property type="entry name" value="DnaA_dom"/>
</dbReference>
<dbReference type="InterPro" id="IPR017788">
    <property type="entry name" value="Hda"/>
</dbReference>
<dbReference type="InterPro" id="IPR022864">
    <property type="entry name" value="Hda_Enterobact"/>
</dbReference>
<dbReference type="InterPro" id="IPR055199">
    <property type="entry name" value="Hda_lid"/>
</dbReference>
<dbReference type="InterPro" id="IPR027417">
    <property type="entry name" value="P-loop_NTPase"/>
</dbReference>
<dbReference type="NCBIfam" id="TIGR03420">
    <property type="entry name" value="DnaA_homol_Hda"/>
    <property type="match status" value="1"/>
</dbReference>
<dbReference type="NCBIfam" id="NF005982">
    <property type="entry name" value="PRK08084.1"/>
    <property type="match status" value="1"/>
</dbReference>
<dbReference type="PANTHER" id="PTHR30050">
    <property type="entry name" value="CHROMOSOMAL REPLICATION INITIATOR PROTEIN DNAA"/>
    <property type="match status" value="1"/>
</dbReference>
<dbReference type="PANTHER" id="PTHR30050:SF5">
    <property type="entry name" value="DNAA REGULATORY INACTIVATOR HDA"/>
    <property type="match status" value="1"/>
</dbReference>
<dbReference type="Pfam" id="PF00308">
    <property type="entry name" value="Bac_DnaA"/>
    <property type="match status" value="1"/>
</dbReference>
<dbReference type="Pfam" id="PF22688">
    <property type="entry name" value="Hda_lid"/>
    <property type="match status" value="1"/>
</dbReference>
<dbReference type="PRINTS" id="PR00051">
    <property type="entry name" value="DNAA"/>
</dbReference>
<dbReference type="SUPFAM" id="SSF52540">
    <property type="entry name" value="P-loop containing nucleoside triphosphate hydrolases"/>
    <property type="match status" value="1"/>
</dbReference>
<protein>
    <recommendedName>
        <fullName evidence="2">DnaA regulatory inactivator Hda</fullName>
    </recommendedName>
</protein>
<gene>
    <name evidence="2" type="primary">hda</name>
    <name type="ordered locus">EFER_0680</name>
</gene>
<reference key="1">
    <citation type="journal article" date="2009" name="PLoS Genet.">
        <title>Organised genome dynamics in the Escherichia coli species results in highly diverse adaptive paths.</title>
        <authorList>
            <person name="Touchon M."/>
            <person name="Hoede C."/>
            <person name="Tenaillon O."/>
            <person name="Barbe V."/>
            <person name="Baeriswyl S."/>
            <person name="Bidet P."/>
            <person name="Bingen E."/>
            <person name="Bonacorsi S."/>
            <person name="Bouchier C."/>
            <person name="Bouvet O."/>
            <person name="Calteau A."/>
            <person name="Chiapello H."/>
            <person name="Clermont O."/>
            <person name="Cruveiller S."/>
            <person name="Danchin A."/>
            <person name="Diard M."/>
            <person name="Dossat C."/>
            <person name="Karoui M.E."/>
            <person name="Frapy E."/>
            <person name="Garry L."/>
            <person name="Ghigo J.M."/>
            <person name="Gilles A.M."/>
            <person name="Johnson J."/>
            <person name="Le Bouguenec C."/>
            <person name="Lescat M."/>
            <person name="Mangenot S."/>
            <person name="Martinez-Jehanne V."/>
            <person name="Matic I."/>
            <person name="Nassif X."/>
            <person name="Oztas S."/>
            <person name="Petit M.A."/>
            <person name="Pichon C."/>
            <person name="Rouy Z."/>
            <person name="Ruf C.S."/>
            <person name="Schneider D."/>
            <person name="Tourret J."/>
            <person name="Vacherie B."/>
            <person name="Vallenet D."/>
            <person name="Medigue C."/>
            <person name="Rocha E.P.C."/>
            <person name="Denamur E."/>
        </authorList>
    </citation>
    <scope>NUCLEOTIDE SEQUENCE [LARGE SCALE GENOMIC DNA]</scope>
    <source>
        <strain>ATCC 35469 / DSM 13698 / BCRC 15582 / CCUG 18766 / IAM 14443 / JCM 21226 / LMG 7866 / NBRC 102419 / NCTC 12128 / CDC 0568-73</strain>
    </source>
</reference>
<name>HDA_ESCF3</name>
<feature type="chain" id="PRO_1000137815" description="DnaA regulatory inactivator Hda">
    <location>
        <begin position="1"/>
        <end position="233"/>
    </location>
</feature>
<proteinExistence type="inferred from homology"/>
<accession>B7LKE6</accession>
<organism>
    <name type="scientific">Escherichia fergusonii (strain ATCC 35469 / DSM 13698 / CCUG 18766 / IAM 14443 / JCM 21226 / LMG 7866 / NBRC 102419 / NCTC 12128 / CDC 0568-73)</name>
    <dbReference type="NCBI Taxonomy" id="585054"/>
    <lineage>
        <taxon>Bacteria</taxon>
        <taxon>Pseudomonadati</taxon>
        <taxon>Pseudomonadota</taxon>
        <taxon>Gammaproteobacteria</taxon>
        <taxon>Enterobacterales</taxon>
        <taxon>Enterobacteriaceae</taxon>
        <taxon>Escherichia</taxon>
    </lineage>
</organism>
<comment type="function">
    <text evidence="1">Mediates the interaction of DNA replication initiator protein DnaA with DNA polymerase subunit beta sliding clamp (dnaN). Stimulates hydrolysis of ATP-DnaA to ADP-DnaA, rendering DnaA inactive for reinitiation, a process called regulatory inhibition of DnaA or RIDA (By similarity).</text>
</comment>
<comment type="subunit">
    <text evidence="2">The active form seems to be an ADP-bound monomer. Forms the RIDA complex (regulatory inactivation of DnaA) of ATP-DnaA, ADP-Hda and the DNA-loaded beta sliding clamp (dnaN).</text>
</comment>
<comment type="similarity">
    <text evidence="2">Belongs to the DnaA family. HdA subfamily.</text>
</comment>
<comment type="sequence caution" evidence="3">
    <conflict type="erroneous initiation">
        <sequence resource="EMBL-CDS" id="CAQ88223"/>
    </conflict>
</comment>